<organism>
    <name type="scientific">Schizosaccharomyces pombe (strain 972 / ATCC 24843)</name>
    <name type="common">Fission yeast</name>
    <dbReference type="NCBI Taxonomy" id="284812"/>
    <lineage>
        <taxon>Eukaryota</taxon>
        <taxon>Fungi</taxon>
        <taxon>Dikarya</taxon>
        <taxon>Ascomycota</taxon>
        <taxon>Taphrinomycotina</taxon>
        <taxon>Schizosaccharomycetes</taxon>
        <taxon>Schizosaccharomycetales</taxon>
        <taxon>Schizosaccharomycetaceae</taxon>
        <taxon>Schizosaccharomyces</taxon>
    </lineage>
</organism>
<feature type="chain" id="PRO_0000193923" description="Phosphatidyl-N-methylethanolamine N-methyltransferase">
    <location>
        <begin position="1"/>
        <end position="196"/>
    </location>
</feature>
<feature type="topological domain" description="Lumenal" evidence="1">
    <location>
        <position position="1"/>
    </location>
</feature>
<feature type="intramembrane region" description="Helical" evidence="1">
    <location>
        <begin position="2"/>
        <end position="28"/>
    </location>
</feature>
<feature type="topological domain" description="Lumenal" evidence="1">
    <location>
        <begin position="29"/>
        <end position="40"/>
    </location>
</feature>
<feature type="transmembrane region" description="Helical" evidence="1">
    <location>
        <begin position="41"/>
        <end position="62"/>
    </location>
</feature>
<feature type="topological domain" description="Cytoplasmic" evidence="1">
    <location>
        <begin position="63"/>
        <end position="89"/>
    </location>
</feature>
<feature type="transmembrane region" description="Helical" evidence="1">
    <location>
        <begin position="90"/>
        <end position="110"/>
    </location>
</feature>
<feature type="topological domain" description="Lumenal" evidence="1">
    <location>
        <begin position="111"/>
        <end position="153"/>
    </location>
</feature>
<feature type="transmembrane region" description="Helical" evidence="1">
    <location>
        <begin position="154"/>
        <end position="174"/>
    </location>
</feature>
<feature type="topological domain" description="Cytoplasmic" evidence="1">
    <location>
        <begin position="175"/>
        <end position="196"/>
    </location>
</feature>
<feature type="binding site" evidence="1">
    <location>
        <begin position="94"/>
        <end position="96"/>
    </location>
    <ligand>
        <name>S-adenosyl-L-methionine</name>
        <dbReference type="ChEBI" id="CHEBI:59789"/>
    </ligand>
</feature>
<feature type="binding site" evidence="1">
    <location>
        <begin position="176"/>
        <end position="177"/>
    </location>
    <ligand>
        <name>S-adenosyl-L-methionine</name>
        <dbReference type="ChEBI" id="CHEBI:59789"/>
    </ligand>
</feature>
<feature type="sequence conflict" description="In Ref. 1; AAB61409." evidence="5" ref="1">
    <original>D</original>
    <variation>DND</variation>
    <location>
        <position position="135"/>
    </location>
</feature>
<feature type="sequence conflict" description="In Ref. 1; AAB61409." evidence="5" ref="1">
    <location>
        <begin position="177"/>
        <end position="196"/>
    </location>
</feature>
<gene>
    <name evidence="4" type="primary">cho1</name>
    <name evidence="7" type="ORF">SPBC337.16</name>
</gene>
<proteinExistence type="inferred from homology"/>
<accession>O74827</accession>
<accession>A0AAN2L350</accession>
<accession>P87300</accession>
<dbReference type="EC" id="2.1.1.71" evidence="1 6"/>
<dbReference type="EMBL" id="AF004112">
    <property type="protein sequence ID" value="AAB61409.1"/>
    <property type="status" value="ALT_INIT"/>
    <property type="molecule type" value="Genomic_DNA"/>
</dbReference>
<dbReference type="EMBL" id="CU329671">
    <property type="protein sequence ID" value="CAK9839720.1"/>
    <property type="molecule type" value="Genomic_DNA"/>
</dbReference>
<dbReference type="PIR" id="T40269">
    <property type="entry name" value="T40269"/>
</dbReference>
<dbReference type="RefSeq" id="NP_595417.1">
    <property type="nucleotide sequence ID" value="NM_001021324.2"/>
</dbReference>
<dbReference type="BioGRID" id="277511">
    <property type="interactions" value="98"/>
</dbReference>
<dbReference type="FunCoup" id="O74827">
    <property type="interactions" value="55"/>
</dbReference>
<dbReference type="STRING" id="284812.O74827"/>
<dbReference type="PaxDb" id="4896-SPBC337.16.1"/>
<dbReference type="EnsemblFungi" id="SPBC337.16.1">
    <property type="protein sequence ID" value="SPBC337.16.1:pep"/>
    <property type="gene ID" value="SPBC337.16"/>
</dbReference>
<dbReference type="GeneID" id="2540995"/>
<dbReference type="KEGG" id="spo:2540995"/>
<dbReference type="PomBase" id="SPBC337.16">
    <property type="gene designation" value="cho1"/>
</dbReference>
<dbReference type="VEuPathDB" id="FungiDB:SPBC337.16"/>
<dbReference type="eggNOG" id="KOG4142">
    <property type="taxonomic scope" value="Eukaryota"/>
</dbReference>
<dbReference type="HOGENOM" id="CLU_086119_0_0_1"/>
<dbReference type="InParanoid" id="O74827"/>
<dbReference type="OMA" id="PTFWNIA"/>
<dbReference type="PhylomeDB" id="O74827"/>
<dbReference type="Reactome" id="R-SPO-1483191">
    <property type="pathway name" value="Synthesis of PC"/>
</dbReference>
<dbReference type="UniPathway" id="UPA00753"/>
<dbReference type="PRO" id="PR:O74827"/>
<dbReference type="Proteomes" id="UP000002485">
    <property type="component" value="Chromosome II"/>
</dbReference>
<dbReference type="GO" id="GO:0005783">
    <property type="term" value="C:endoplasmic reticulum"/>
    <property type="evidence" value="ECO:0007005"/>
    <property type="project" value="PomBase"/>
</dbReference>
<dbReference type="GO" id="GO:0005789">
    <property type="term" value="C:endoplasmic reticulum membrane"/>
    <property type="evidence" value="ECO:0007669"/>
    <property type="project" value="UniProtKB-UniRule"/>
</dbReference>
<dbReference type="GO" id="GO:0031966">
    <property type="term" value="C:mitochondrial membrane"/>
    <property type="evidence" value="ECO:0007669"/>
    <property type="project" value="UniProtKB-UniRule"/>
</dbReference>
<dbReference type="GO" id="GO:0005741">
    <property type="term" value="C:mitochondrial outer membrane"/>
    <property type="evidence" value="ECO:0000266"/>
    <property type="project" value="PomBase"/>
</dbReference>
<dbReference type="GO" id="GO:0000773">
    <property type="term" value="F:phosphatidyl-N-methylethanolamine N-methyltransferase activity"/>
    <property type="evidence" value="ECO:0007669"/>
    <property type="project" value="UniProtKB-UniRule"/>
</dbReference>
<dbReference type="GO" id="GO:0032259">
    <property type="term" value="P:methylation"/>
    <property type="evidence" value="ECO:0007669"/>
    <property type="project" value="UniProtKB-KW"/>
</dbReference>
<dbReference type="GO" id="GO:0006656">
    <property type="term" value="P:phosphatidylcholine biosynthetic process"/>
    <property type="evidence" value="ECO:0007669"/>
    <property type="project" value="UniProtKB-UniRule"/>
</dbReference>
<dbReference type="FunFam" id="1.20.120.1630:FF:000005">
    <property type="entry name" value="Phosphatidylethanolamine N-methyltransferase"/>
    <property type="match status" value="1"/>
</dbReference>
<dbReference type="Gene3D" id="1.20.120.1630">
    <property type="match status" value="1"/>
</dbReference>
<dbReference type="HAMAP" id="MF_03216">
    <property type="entry name" value="PLMT"/>
    <property type="match status" value="1"/>
</dbReference>
<dbReference type="InterPro" id="IPR024960">
    <property type="entry name" value="PEMT/MFAP"/>
</dbReference>
<dbReference type="InterPro" id="IPR007318">
    <property type="entry name" value="Phopholipid_MeTrfase"/>
</dbReference>
<dbReference type="PANTHER" id="PTHR15458">
    <property type="entry name" value="PHOSPHATIDYLETHANOLAMINE N-METHYLTRANSFERASE"/>
    <property type="match status" value="1"/>
</dbReference>
<dbReference type="PANTHER" id="PTHR15458:SF5">
    <property type="entry name" value="PHOSPHATIDYLETHANOLAMINE N-METHYLTRANSFERASE"/>
    <property type="match status" value="1"/>
</dbReference>
<dbReference type="Pfam" id="PF04191">
    <property type="entry name" value="PEMT"/>
    <property type="match status" value="1"/>
</dbReference>
<dbReference type="PIRSF" id="PIRSF005444">
    <property type="entry name" value="PEMT"/>
    <property type="match status" value="1"/>
</dbReference>
<dbReference type="PROSITE" id="PS51599">
    <property type="entry name" value="SAM_PEMT_PEM2"/>
    <property type="match status" value="1"/>
</dbReference>
<name>PLMT_SCHPO</name>
<sequence length="196" mass="21787">MAIFEINNSFLICAVSIALNPLLWNIAARSEYNHKTLTKLANGDSKKACYMLAACIFVAGIVRDLIYQNALKQQPTLGIFMNPLVQGIAKLIFCFGSVLVLSSMYKLGLVGTYLGDYFGFLLPERVSGFPFNVNDNPMYNGSTLCFLSTALRYGKVAGLLLTLEVFFVYRIALKFEEPFTAKIYAARDSKQAKKSE</sequence>
<keyword id="KW-0256">Endoplasmic reticulum</keyword>
<keyword id="KW-0444">Lipid biosynthesis</keyword>
<keyword id="KW-0443">Lipid metabolism</keyword>
<keyword id="KW-0472">Membrane</keyword>
<keyword id="KW-0489">Methyltransferase</keyword>
<keyword id="KW-0496">Mitochondrion</keyword>
<keyword id="KW-0594">Phospholipid biosynthesis</keyword>
<keyword id="KW-1208">Phospholipid metabolism</keyword>
<keyword id="KW-1185">Reference proteome</keyword>
<keyword id="KW-0949">S-adenosyl-L-methionine</keyword>
<keyword id="KW-0808">Transferase</keyword>
<keyword id="KW-0812">Transmembrane</keyword>
<keyword id="KW-1133">Transmembrane helix</keyword>
<comment type="function">
    <text evidence="1 3">Catalyzes the second two steps of the methylation pathway of phosphatidylcholine biosynthesis, the SAM-dependent methylation of phosphatidylmonomethylethanolamine (PMME) to phosphatidyldimethylethanolamine (PDME) and of PDME to phosphatidylcholine (PC).</text>
</comment>
<comment type="catalytic activity">
    <reaction evidence="1 6">
        <text>a 1,2-diacyl-sn-glycero-3-phospho-N-methylethanolamine + S-adenosyl-L-methionine = a 1,2-diacyl-sn-glycero-3-phospho-N,N-dimethylethanolamine + S-adenosyl-L-homocysteine + H(+)</text>
        <dbReference type="Rhea" id="RHEA:32735"/>
        <dbReference type="ChEBI" id="CHEBI:15378"/>
        <dbReference type="ChEBI" id="CHEBI:57856"/>
        <dbReference type="ChEBI" id="CHEBI:59789"/>
        <dbReference type="ChEBI" id="CHEBI:64572"/>
        <dbReference type="ChEBI" id="CHEBI:64573"/>
        <dbReference type="EC" id="2.1.1.71"/>
    </reaction>
</comment>
<comment type="catalytic activity">
    <reaction evidence="1 6">
        <text>a 1,2-diacyl-sn-glycero-3-phospho-N,N-dimethylethanolamine + S-adenosyl-L-methionine = a 1,2-diacyl-sn-glycero-3-phosphocholine + S-adenosyl-L-homocysteine + H(+)</text>
        <dbReference type="Rhea" id="RHEA:32739"/>
        <dbReference type="ChEBI" id="CHEBI:15378"/>
        <dbReference type="ChEBI" id="CHEBI:57643"/>
        <dbReference type="ChEBI" id="CHEBI:57856"/>
        <dbReference type="ChEBI" id="CHEBI:59789"/>
        <dbReference type="ChEBI" id="CHEBI:64572"/>
        <dbReference type="EC" id="2.1.1.71"/>
    </reaction>
</comment>
<comment type="pathway">
    <text evidence="1 6">Phospholipid metabolism; phosphatidylcholine biosynthesis.</text>
</comment>
<comment type="subcellular location">
    <subcellularLocation>
        <location evidence="1 2">Endoplasmic reticulum membrane</location>
        <topology evidence="1">Multi-pass membrane protein</topology>
    </subcellularLocation>
    <subcellularLocation>
        <location evidence="1">Mitochondrion membrane</location>
        <topology evidence="1">Multi-pass membrane protein</topology>
    </subcellularLocation>
</comment>
<comment type="similarity">
    <text evidence="1">Belongs to the class VI-like SAM-binding methyltransferase superfamily. PEMT/PEM2 methyltransferase family.</text>
</comment>
<comment type="sequence caution" evidence="5">
    <conflict type="erroneous initiation">
        <sequence resource="EMBL-CDS" id="AAB61409"/>
    </conflict>
    <text>Extended N-terminus.</text>
</comment>
<protein>
    <recommendedName>
        <fullName evidence="1 5">Phosphatidyl-N-methylethanolamine N-methyltransferase</fullName>
        <ecNumber evidence="1 6">2.1.1.71</ecNumber>
    </recommendedName>
    <alternativeName>
        <fullName evidence="1 4">Phospholipid methyltransferase</fullName>
        <shortName evidence="1">PLMT</shortName>
    </alternativeName>
</protein>
<reference key="1">
    <citation type="journal article" date="1998" name="Genetics">
        <title>The Schizosaccharomyces pombe cho1+ gene encodes a phospholipid methyltransferase.</title>
        <authorList>
            <person name="Kanipes M.I."/>
            <person name="Hill J.E."/>
            <person name="Henry S.A."/>
        </authorList>
    </citation>
    <scope>NUCLEOTIDE SEQUENCE [GENOMIC DNA]</scope>
    <scope>FUNCTION</scope>
    <scope>PATHWAY</scope>
</reference>
<reference key="2">
    <citation type="journal article" date="2002" name="Nature">
        <title>The genome sequence of Schizosaccharomyces pombe.</title>
        <authorList>
            <person name="Wood V."/>
            <person name="Gwilliam R."/>
            <person name="Rajandream M.A."/>
            <person name="Lyne M.H."/>
            <person name="Lyne R."/>
            <person name="Stewart A."/>
            <person name="Sgouros J.G."/>
            <person name="Peat N."/>
            <person name="Hayles J."/>
            <person name="Baker S.G."/>
            <person name="Basham D."/>
            <person name="Bowman S."/>
            <person name="Brooks K."/>
            <person name="Brown D."/>
            <person name="Brown S."/>
            <person name="Chillingworth T."/>
            <person name="Churcher C.M."/>
            <person name="Collins M."/>
            <person name="Connor R."/>
            <person name="Cronin A."/>
            <person name="Davis P."/>
            <person name="Feltwell T."/>
            <person name="Fraser A."/>
            <person name="Gentles S."/>
            <person name="Goble A."/>
            <person name="Hamlin N."/>
            <person name="Harris D.E."/>
            <person name="Hidalgo J."/>
            <person name="Hodgson G."/>
            <person name="Holroyd S."/>
            <person name="Hornsby T."/>
            <person name="Howarth S."/>
            <person name="Huckle E.J."/>
            <person name="Hunt S."/>
            <person name="Jagels K."/>
            <person name="James K.D."/>
            <person name="Jones L."/>
            <person name="Jones M."/>
            <person name="Leather S."/>
            <person name="McDonald S."/>
            <person name="McLean J."/>
            <person name="Mooney P."/>
            <person name="Moule S."/>
            <person name="Mungall K.L."/>
            <person name="Murphy L.D."/>
            <person name="Niblett D."/>
            <person name="Odell C."/>
            <person name="Oliver K."/>
            <person name="O'Neil S."/>
            <person name="Pearson D."/>
            <person name="Quail M.A."/>
            <person name="Rabbinowitsch E."/>
            <person name="Rutherford K.M."/>
            <person name="Rutter S."/>
            <person name="Saunders D."/>
            <person name="Seeger K."/>
            <person name="Sharp S."/>
            <person name="Skelton J."/>
            <person name="Simmonds M.N."/>
            <person name="Squares R."/>
            <person name="Squares S."/>
            <person name="Stevens K."/>
            <person name="Taylor K."/>
            <person name="Taylor R.G."/>
            <person name="Tivey A."/>
            <person name="Walsh S.V."/>
            <person name="Warren T."/>
            <person name="Whitehead S."/>
            <person name="Woodward J.R."/>
            <person name="Volckaert G."/>
            <person name="Aert R."/>
            <person name="Robben J."/>
            <person name="Grymonprez B."/>
            <person name="Weltjens I."/>
            <person name="Vanstreels E."/>
            <person name="Rieger M."/>
            <person name="Schaefer M."/>
            <person name="Mueller-Auer S."/>
            <person name="Gabel C."/>
            <person name="Fuchs M."/>
            <person name="Duesterhoeft A."/>
            <person name="Fritzc C."/>
            <person name="Holzer E."/>
            <person name="Moestl D."/>
            <person name="Hilbert H."/>
            <person name="Borzym K."/>
            <person name="Langer I."/>
            <person name="Beck A."/>
            <person name="Lehrach H."/>
            <person name="Reinhardt R."/>
            <person name="Pohl T.M."/>
            <person name="Eger P."/>
            <person name="Zimmermann W."/>
            <person name="Wedler H."/>
            <person name="Wambutt R."/>
            <person name="Purnelle B."/>
            <person name="Goffeau A."/>
            <person name="Cadieu E."/>
            <person name="Dreano S."/>
            <person name="Gloux S."/>
            <person name="Lelaure V."/>
            <person name="Mottier S."/>
            <person name="Galibert F."/>
            <person name="Aves S.J."/>
            <person name="Xiang Z."/>
            <person name="Hunt C."/>
            <person name="Moore K."/>
            <person name="Hurst S.M."/>
            <person name="Lucas M."/>
            <person name="Rochet M."/>
            <person name="Gaillardin C."/>
            <person name="Tallada V.A."/>
            <person name="Garzon A."/>
            <person name="Thode G."/>
            <person name="Daga R.R."/>
            <person name="Cruzado L."/>
            <person name="Jimenez J."/>
            <person name="Sanchez M."/>
            <person name="del Rey F."/>
            <person name="Benito J."/>
            <person name="Dominguez A."/>
            <person name="Revuelta J.L."/>
            <person name="Moreno S."/>
            <person name="Armstrong J."/>
            <person name="Forsburg S.L."/>
            <person name="Cerutti L."/>
            <person name="Lowe T."/>
            <person name="McCombie W.R."/>
            <person name="Paulsen I."/>
            <person name="Potashkin J."/>
            <person name="Shpakovski G.V."/>
            <person name="Ussery D."/>
            <person name="Barrell B.G."/>
            <person name="Nurse P."/>
        </authorList>
    </citation>
    <scope>NUCLEOTIDE SEQUENCE [LARGE SCALE GENOMIC DNA]</scope>
    <source>
        <strain>972 / ATCC 24843</strain>
    </source>
</reference>
<reference key="3">
    <citation type="journal article" date="2006" name="Nat. Biotechnol.">
        <title>ORFeome cloning and global analysis of protein localization in the fission yeast Schizosaccharomyces pombe.</title>
        <authorList>
            <person name="Matsuyama A."/>
            <person name="Arai R."/>
            <person name="Yashiroda Y."/>
            <person name="Shirai A."/>
            <person name="Kamata A."/>
            <person name="Sekido S."/>
            <person name="Kobayashi Y."/>
            <person name="Hashimoto A."/>
            <person name="Hamamoto M."/>
            <person name="Hiraoka Y."/>
            <person name="Horinouchi S."/>
            <person name="Yoshida M."/>
        </authorList>
    </citation>
    <scope>SUBCELLULAR LOCATION [LARGE SCALE ANALYSIS]</scope>
</reference>
<evidence type="ECO:0000255" key="1">
    <source>
        <dbReference type="HAMAP-Rule" id="MF_03216"/>
    </source>
</evidence>
<evidence type="ECO:0000269" key="2">
    <source>
    </source>
</evidence>
<evidence type="ECO:0000269" key="3">
    <source>
    </source>
</evidence>
<evidence type="ECO:0000303" key="4">
    <source>
    </source>
</evidence>
<evidence type="ECO:0000305" key="5"/>
<evidence type="ECO:0000305" key="6">
    <source>
    </source>
</evidence>
<evidence type="ECO:0000312" key="7">
    <source>
        <dbReference type="PomBase" id="SPBC337.16"/>
    </source>
</evidence>